<evidence type="ECO:0000250" key="1"/>
<name>XEN3_XENLA</name>
<comment type="function">
    <text>Lacks alpha-neurotoxic activity, has apparently no antibacterial activity, nor anti-coagulant potency.</text>
</comment>
<comment type="subcellular location">
    <subcellularLocation>
        <location>Secreted</location>
    </subcellularLocation>
</comment>
<comment type="tissue specificity">
    <text>Expressed by the skin dorsal glands.</text>
</comment>
<keyword id="KW-0878">Amphibian defense peptide</keyword>
<keyword id="KW-0903">Direct protein sequencing</keyword>
<keyword id="KW-1015">Disulfide bond</keyword>
<keyword id="KW-1185">Reference proteome</keyword>
<keyword id="KW-0964">Secreted</keyword>
<organism>
    <name type="scientific">Xenopus laevis</name>
    <name type="common">African clawed frog</name>
    <dbReference type="NCBI Taxonomy" id="8355"/>
    <lineage>
        <taxon>Eukaryota</taxon>
        <taxon>Metazoa</taxon>
        <taxon>Chordata</taxon>
        <taxon>Craniata</taxon>
        <taxon>Vertebrata</taxon>
        <taxon>Euteleostomi</taxon>
        <taxon>Amphibia</taxon>
        <taxon>Batrachia</taxon>
        <taxon>Anura</taxon>
        <taxon>Pipoidea</taxon>
        <taxon>Pipidae</taxon>
        <taxon>Xenopodinae</taxon>
        <taxon>Xenopus</taxon>
        <taxon>Xenopus</taxon>
    </lineage>
</organism>
<dbReference type="SMR" id="P38952"/>
<dbReference type="Proteomes" id="UP000186698">
    <property type="component" value="Unplaced"/>
</dbReference>
<dbReference type="GO" id="GO:0005576">
    <property type="term" value="C:extracellular region"/>
    <property type="evidence" value="ECO:0007669"/>
    <property type="project" value="UniProtKB-SubCell"/>
</dbReference>
<dbReference type="GO" id="GO:0006952">
    <property type="term" value="P:defense response"/>
    <property type="evidence" value="ECO:0007669"/>
    <property type="project" value="UniProtKB-KW"/>
</dbReference>
<dbReference type="Gene3D" id="2.10.60.10">
    <property type="entry name" value="CD59"/>
    <property type="match status" value="1"/>
</dbReference>
<dbReference type="InterPro" id="IPR045860">
    <property type="entry name" value="Snake_toxin-like_sf"/>
</dbReference>
<dbReference type="SUPFAM" id="SSF57302">
    <property type="entry name" value="Snake toxin-like"/>
    <property type="match status" value="1"/>
</dbReference>
<accession>P38952</accession>
<sequence>LKCVNLQANGVKMTQECAKEDTKCLTLRSLKKTLKFCASDRICKTMKIASLPGEQITCCEGNMCNA</sequence>
<protein>
    <recommendedName>
        <fullName>Xenoxin-3</fullName>
    </recommendedName>
</protein>
<proteinExistence type="evidence at protein level"/>
<feature type="chain" id="PRO_0000190097" description="Xenoxin-3">
    <location>
        <begin position="1"/>
        <end position="66"/>
    </location>
</feature>
<feature type="disulfide bond" evidence="1">
    <location>
        <begin position="3"/>
        <end position="24"/>
    </location>
</feature>
<feature type="disulfide bond" evidence="1">
    <location>
        <begin position="17"/>
        <end position="37"/>
    </location>
</feature>
<feature type="disulfide bond" evidence="1">
    <location>
        <begin position="43"/>
        <end position="58"/>
    </location>
</feature>
<feature type="disulfide bond" evidence="1">
    <location>
        <begin position="59"/>
        <end position="64"/>
    </location>
</feature>
<feature type="unsure residue">
    <location>
        <begin position="23"/>
        <end position="35"/>
    </location>
</feature>
<feature type="unsure residue">
    <location>
        <begin position="42"/>
        <end position="47"/>
    </location>
</feature>
<reference key="1">
    <citation type="journal article" date="1993" name="J. Biol. Chem.">
        <title>Xenoxins, a family of peptides from dorsal gland secretion of Xenopus laevis related to snake venom cytotoxins and neurotoxins.</title>
        <authorList>
            <person name="Kolbe H.V.J."/>
            <person name="Huber A."/>
            <person name="Cordier P."/>
            <person name="Rasmussen U.B."/>
            <person name="Bouchon B."/>
            <person name="Jaquinod M."/>
            <person name="Vlasak R."/>
            <person name="Delot E.C."/>
            <person name="Kreil G."/>
        </authorList>
    </citation>
    <scope>PROTEIN SEQUENCE</scope>
    <source>
        <tissue>Skin secretion</tissue>
    </source>
</reference>